<dbReference type="EMBL" id="CP001172">
    <property type="protein sequence ID" value="ACJ58332.1"/>
    <property type="molecule type" value="Genomic_DNA"/>
</dbReference>
<dbReference type="RefSeq" id="WP_000224542.1">
    <property type="nucleotide sequence ID" value="NZ_CP001172.1"/>
</dbReference>
<dbReference type="SMR" id="B7H293"/>
<dbReference type="HOGENOM" id="CLU_084338_2_0_6"/>
<dbReference type="Proteomes" id="UP000006924">
    <property type="component" value="Chromosome"/>
</dbReference>
<dbReference type="GO" id="GO:0005886">
    <property type="term" value="C:plasma membrane"/>
    <property type="evidence" value="ECO:0007669"/>
    <property type="project" value="UniProtKB-SubCell"/>
</dbReference>
<dbReference type="GO" id="GO:0045259">
    <property type="term" value="C:proton-transporting ATP synthase complex"/>
    <property type="evidence" value="ECO:0007669"/>
    <property type="project" value="UniProtKB-KW"/>
</dbReference>
<dbReference type="GO" id="GO:0005524">
    <property type="term" value="F:ATP binding"/>
    <property type="evidence" value="ECO:0007669"/>
    <property type="project" value="UniProtKB-UniRule"/>
</dbReference>
<dbReference type="GO" id="GO:0046933">
    <property type="term" value="F:proton-transporting ATP synthase activity, rotational mechanism"/>
    <property type="evidence" value="ECO:0007669"/>
    <property type="project" value="UniProtKB-UniRule"/>
</dbReference>
<dbReference type="CDD" id="cd12152">
    <property type="entry name" value="F1-ATPase_delta"/>
    <property type="match status" value="1"/>
</dbReference>
<dbReference type="FunFam" id="2.60.15.10:FF:000001">
    <property type="entry name" value="ATP synthase epsilon chain"/>
    <property type="match status" value="1"/>
</dbReference>
<dbReference type="Gene3D" id="1.20.5.440">
    <property type="entry name" value="ATP synthase delta/epsilon subunit, C-terminal domain"/>
    <property type="match status" value="1"/>
</dbReference>
<dbReference type="Gene3D" id="2.60.15.10">
    <property type="entry name" value="F0F1 ATP synthase delta/epsilon subunit, N-terminal"/>
    <property type="match status" value="1"/>
</dbReference>
<dbReference type="HAMAP" id="MF_00530">
    <property type="entry name" value="ATP_synth_epsil_bac"/>
    <property type="match status" value="1"/>
</dbReference>
<dbReference type="InterPro" id="IPR036794">
    <property type="entry name" value="ATP_F1_dsu/esu_C_sf"/>
</dbReference>
<dbReference type="InterPro" id="IPR001469">
    <property type="entry name" value="ATP_synth_F1_dsu/esu"/>
</dbReference>
<dbReference type="InterPro" id="IPR020546">
    <property type="entry name" value="ATP_synth_F1_dsu/esu_N"/>
</dbReference>
<dbReference type="InterPro" id="IPR036771">
    <property type="entry name" value="ATPsynth_dsu/esu_N"/>
</dbReference>
<dbReference type="NCBIfam" id="TIGR01216">
    <property type="entry name" value="ATP_synt_epsi"/>
    <property type="match status" value="1"/>
</dbReference>
<dbReference type="NCBIfam" id="NF001847">
    <property type="entry name" value="PRK00571.1-4"/>
    <property type="match status" value="1"/>
</dbReference>
<dbReference type="PANTHER" id="PTHR13822">
    <property type="entry name" value="ATP SYNTHASE DELTA/EPSILON CHAIN"/>
    <property type="match status" value="1"/>
</dbReference>
<dbReference type="PANTHER" id="PTHR13822:SF10">
    <property type="entry name" value="ATP SYNTHASE EPSILON CHAIN, CHLOROPLASTIC"/>
    <property type="match status" value="1"/>
</dbReference>
<dbReference type="Pfam" id="PF02823">
    <property type="entry name" value="ATP-synt_DE_N"/>
    <property type="match status" value="1"/>
</dbReference>
<dbReference type="SUPFAM" id="SSF46604">
    <property type="entry name" value="Epsilon subunit of F1F0-ATP synthase C-terminal domain"/>
    <property type="match status" value="1"/>
</dbReference>
<dbReference type="SUPFAM" id="SSF51344">
    <property type="entry name" value="Epsilon subunit of F1F0-ATP synthase N-terminal domain"/>
    <property type="match status" value="1"/>
</dbReference>
<proteinExistence type="inferred from homology"/>
<sequence>MATMQCDVVSVKESIYSGAVTMLIAKGAGGELGILPGHAPLVTLLQPGPIRVLLENGTEEIVYVSGGVLEVQPHVVTVLADTAIRADNLDEAAILEARKNAEQLLANQKSDLDSAAALAALAETAAQLETIRKIKNRAQ</sequence>
<accession>B7H293</accession>
<evidence type="ECO:0000255" key="1">
    <source>
        <dbReference type="HAMAP-Rule" id="MF_00530"/>
    </source>
</evidence>
<comment type="function">
    <text evidence="1">Produces ATP from ADP in the presence of a proton gradient across the membrane.</text>
</comment>
<comment type="subunit">
    <text evidence="1">F-type ATPases have 2 components, CF(1) - the catalytic core - and CF(0) - the membrane proton channel. CF(1) has five subunits: alpha(3), beta(3), gamma(1), delta(1), epsilon(1). CF(0) has three main subunits: a, b and c.</text>
</comment>
<comment type="subcellular location">
    <subcellularLocation>
        <location evidence="1">Cell inner membrane</location>
        <topology evidence="1">Peripheral membrane protein</topology>
    </subcellularLocation>
</comment>
<comment type="similarity">
    <text evidence="1">Belongs to the ATPase epsilon chain family.</text>
</comment>
<feature type="chain" id="PRO_1000127813" description="ATP synthase epsilon chain">
    <location>
        <begin position="1"/>
        <end position="139"/>
    </location>
</feature>
<reference key="1">
    <citation type="journal article" date="2008" name="J. Bacteriol.">
        <title>Comparative genome sequence analysis of multidrug-resistant Acinetobacter baumannii.</title>
        <authorList>
            <person name="Adams M.D."/>
            <person name="Goglin K."/>
            <person name="Molyneaux N."/>
            <person name="Hujer K.M."/>
            <person name="Lavender H."/>
            <person name="Jamison J.J."/>
            <person name="MacDonald I.J."/>
            <person name="Martin K.M."/>
            <person name="Russo T."/>
            <person name="Campagnari A.A."/>
            <person name="Hujer A.M."/>
            <person name="Bonomo R.A."/>
            <person name="Gill S.R."/>
        </authorList>
    </citation>
    <scope>NUCLEOTIDE SEQUENCE [LARGE SCALE GENOMIC DNA]</scope>
    <source>
        <strain>AB307-0294</strain>
    </source>
</reference>
<protein>
    <recommendedName>
        <fullName evidence="1">ATP synthase epsilon chain</fullName>
    </recommendedName>
    <alternativeName>
        <fullName evidence="1">ATP synthase F1 sector epsilon subunit</fullName>
    </alternativeName>
    <alternativeName>
        <fullName evidence="1">F-ATPase epsilon subunit</fullName>
    </alternativeName>
</protein>
<keyword id="KW-0066">ATP synthesis</keyword>
<keyword id="KW-0997">Cell inner membrane</keyword>
<keyword id="KW-1003">Cell membrane</keyword>
<keyword id="KW-0139">CF(1)</keyword>
<keyword id="KW-0375">Hydrogen ion transport</keyword>
<keyword id="KW-0406">Ion transport</keyword>
<keyword id="KW-0472">Membrane</keyword>
<keyword id="KW-0813">Transport</keyword>
<name>ATPE_ACIB3</name>
<gene>
    <name evidence="1" type="primary">atpC</name>
    <name type="ordered locus">ABBFA_003364</name>
</gene>
<organism>
    <name type="scientific">Acinetobacter baumannii (strain AB307-0294)</name>
    <dbReference type="NCBI Taxonomy" id="557600"/>
    <lineage>
        <taxon>Bacteria</taxon>
        <taxon>Pseudomonadati</taxon>
        <taxon>Pseudomonadota</taxon>
        <taxon>Gammaproteobacteria</taxon>
        <taxon>Moraxellales</taxon>
        <taxon>Moraxellaceae</taxon>
        <taxon>Acinetobacter</taxon>
        <taxon>Acinetobacter calcoaceticus/baumannii complex</taxon>
    </lineage>
</organism>